<reference key="1">
    <citation type="journal article" date="2008" name="BMC Genomics">
        <title>Genomics of an extreme psychrophile, Psychromonas ingrahamii.</title>
        <authorList>
            <person name="Riley M."/>
            <person name="Staley J.T."/>
            <person name="Danchin A."/>
            <person name="Wang T.Z."/>
            <person name="Brettin T.S."/>
            <person name="Hauser L.J."/>
            <person name="Land M.L."/>
            <person name="Thompson L.S."/>
        </authorList>
    </citation>
    <scope>NUCLEOTIDE SEQUENCE [LARGE SCALE GENOMIC DNA]</scope>
    <source>
        <strain>DSM 17664 / CCUG 51855 / 37</strain>
    </source>
</reference>
<gene>
    <name evidence="1" type="primary">rlmF</name>
    <name type="ordered locus">Ping_0599</name>
</gene>
<dbReference type="EC" id="2.1.1.181" evidence="1"/>
<dbReference type="EMBL" id="CP000510">
    <property type="protein sequence ID" value="ABM02453.1"/>
    <property type="molecule type" value="Genomic_DNA"/>
</dbReference>
<dbReference type="RefSeq" id="WP_011769012.1">
    <property type="nucleotide sequence ID" value="NC_008709.1"/>
</dbReference>
<dbReference type="SMR" id="A1SSI8"/>
<dbReference type="STRING" id="357804.Ping_0599"/>
<dbReference type="KEGG" id="pin:Ping_0599"/>
<dbReference type="eggNOG" id="COG3129">
    <property type="taxonomic scope" value="Bacteria"/>
</dbReference>
<dbReference type="HOGENOM" id="CLU_027534_3_0_6"/>
<dbReference type="OrthoDB" id="1115728at2"/>
<dbReference type="Proteomes" id="UP000000639">
    <property type="component" value="Chromosome"/>
</dbReference>
<dbReference type="GO" id="GO:0005737">
    <property type="term" value="C:cytoplasm"/>
    <property type="evidence" value="ECO:0007669"/>
    <property type="project" value="UniProtKB-SubCell"/>
</dbReference>
<dbReference type="GO" id="GO:0052907">
    <property type="term" value="F:23S rRNA (adenine(1618)-N(6))-methyltransferase activity"/>
    <property type="evidence" value="ECO:0007669"/>
    <property type="project" value="UniProtKB-EC"/>
</dbReference>
<dbReference type="GO" id="GO:0070475">
    <property type="term" value="P:rRNA base methylation"/>
    <property type="evidence" value="ECO:0007669"/>
    <property type="project" value="TreeGrafter"/>
</dbReference>
<dbReference type="CDD" id="cd02440">
    <property type="entry name" value="AdoMet_MTases"/>
    <property type="match status" value="1"/>
</dbReference>
<dbReference type="Gene3D" id="3.40.50.150">
    <property type="entry name" value="Vaccinia Virus protein VP39"/>
    <property type="match status" value="1"/>
</dbReference>
<dbReference type="HAMAP" id="MF_01848">
    <property type="entry name" value="23SrRNA_methyltr_F"/>
    <property type="match status" value="1"/>
</dbReference>
<dbReference type="InterPro" id="IPR010286">
    <property type="entry name" value="METTL16/RlmF"/>
</dbReference>
<dbReference type="InterPro" id="IPR016909">
    <property type="entry name" value="rRNA_lsu_MeTfrase_F"/>
</dbReference>
<dbReference type="InterPro" id="IPR029063">
    <property type="entry name" value="SAM-dependent_MTases_sf"/>
</dbReference>
<dbReference type="NCBIfam" id="NF008725">
    <property type="entry name" value="PRK11727.1"/>
    <property type="match status" value="1"/>
</dbReference>
<dbReference type="PANTHER" id="PTHR13393:SF0">
    <property type="entry name" value="RNA N6-ADENOSINE-METHYLTRANSFERASE METTL16"/>
    <property type="match status" value="1"/>
</dbReference>
<dbReference type="PANTHER" id="PTHR13393">
    <property type="entry name" value="SAM-DEPENDENT METHYLTRANSFERASE"/>
    <property type="match status" value="1"/>
</dbReference>
<dbReference type="Pfam" id="PF05971">
    <property type="entry name" value="Methyltransf_10"/>
    <property type="match status" value="1"/>
</dbReference>
<dbReference type="PIRSF" id="PIRSF029038">
    <property type="entry name" value="Mtase_YbiN_prd"/>
    <property type="match status" value="1"/>
</dbReference>
<dbReference type="SUPFAM" id="SSF53335">
    <property type="entry name" value="S-adenosyl-L-methionine-dependent methyltransferases"/>
    <property type="match status" value="1"/>
</dbReference>
<sequence length="310" mass="34853">MTKDIQVKKLLHPRNLHRGHYDLKQLCEQSPLLSTFLRTNPKGEQTLDFAEPQAVLLLNQVLLKQFYHVDFWQIPKGYLCPPIPGRVDYIHYLADLLGDTFHGKIPEGKQVKVLDIGTGANCIYPILGSQSYGWSFVGTDIDPLSVKMAGLIIKSNVSLKPFIKVQLQANKQAIFAGIIKPKDKFTLTMCNPPFHASMEKALAGSARKIKNLSNDQNNLSRVLNFAGQEGELCCAGGEIRFLKQMIQESKDYARQVCWFTSLVSKSDNIAPLKQQLEKVGAEHVKVIKMAQGQKVSRFIAWSFLPQPQNF</sequence>
<accession>A1SSI8</accession>
<comment type="function">
    <text evidence="1">Specifically methylates the adenine in position 1618 of 23S rRNA.</text>
</comment>
<comment type="catalytic activity">
    <reaction evidence="1">
        <text>adenosine(1618) in 23S rRNA + S-adenosyl-L-methionine = N(6)-methyladenosine(1618) in 23S rRNA + S-adenosyl-L-homocysteine + H(+)</text>
        <dbReference type="Rhea" id="RHEA:16497"/>
        <dbReference type="Rhea" id="RHEA-COMP:10229"/>
        <dbReference type="Rhea" id="RHEA-COMP:10231"/>
        <dbReference type="ChEBI" id="CHEBI:15378"/>
        <dbReference type="ChEBI" id="CHEBI:57856"/>
        <dbReference type="ChEBI" id="CHEBI:59789"/>
        <dbReference type="ChEBI" id="CHEBI:74411"/>
        <dbReference type="ChEBI" id="CHEBI:74449"/>
        <dbReference type="EC" id="2.1.1.181"/>
    </reaction>
</comment>
<comment type="subcellular location">
    <subcellularLocation>
        <location evidence="1">Cytoplasm</location>
    </subcellularLocation>
</comment>
<comment type="similarity">
    <text evidence="1">Belongs to the methyltransferase superfamily. METTL16/RlmF family.</text>
</comment>
<protein>
    <recommendedName>
        <fullName evidence="1">Ribosomal RNA large subunit methyltransferase F</fullName>
        <ecNumber evidence="1">2.1.1.181</ecNumber>
    </recommendedName>
    <alternativeName>
        <fullName evidence="1">23S rRNA mA1618 methyltransferase</fullName>
    </alternativeName>
    <alternativeName>
        <fullName evidence="1">rRNA adenine N-6-methyltransferase</fullName>
    </alternativeName>
</protein>
<keyword id="KW-0963">Cytoplasm</keyword>
<keyword id="KW-0489">Methyltransferase</keyword>
<keyword id="KW-1185">Reference proteome</keyword>
<keyword id="KW-0698">rRNA processing</keyword>
<keyword id="KW-0949">S-adenosyl-L-methionine</keyword>
<keyword id="KW-0808">Transferase</keyword>
<name>RLMF_PSYIN</name>
<evidence type="ECO:0000255" key="1">
    <source>
        <dbReference type="HAMAP-Rule" id="MF_01848"/>
    </source>
</evidence>
<organism>
    <name type="scientific">Psychromonas ingrahamii (strain DSM 17664 / CCUG 51855 / 37)</name>
    <dbReference type="NCBI Taxonomy" id="357804"/>
    <lineage>
        <taxon>Bacteria</taxon>
        <taxon>Pseudomonadati</taxon>
        <taxon>Pseudomonadota</taxon>
        <taxon>Gammaproteobacteria</taxon>
        <taxon>Alteromonadales</taxon>
        <taxon>Psychromonadaceae</taxon>
        <taxon>Psychromonas</taxon>
    </lineage>
</organism>
<proteinExistence type="inferred from homology"/>
<feature type="chain" id="PRO_0000349943" description="Ribosomal RNA large subunit methyltransferase F">
    <location>
        <begin position="1"/>
        <end position="310"/>
    </location>
</feature>